<name>RS10_HELMI</name>
<reference key="1">
    <citation type="journal article" date="2008" name="J. Bacteriol.">
        <title>The genome of Heliobacterium modesticaldum, a phototrophic representative of the Firmicutes containing the simplest photosynthetic apparatus.</title>
        <authorList>
            <person name="Sattley W.M."/>
            <person name="Madigan M.T."/>
            <person name="Swingley W.D."/>
            <person name="Cheung P.C."/>
            <person name="Clocksin K.M."/>
            <person name="Conrad A.L."/>
            <person name="Dejesa L.C."/>
            <person name="Honchak B.M."/>
            <person name="Jung D.O."/>
            <person name="Karbach L.E."/>
            <person name="Kurdoglu A."/>
            <person name="Lahiri S."/>
            <person name="Mastrian S.D."/>
            <person name="Page L.E."/>
            <person name="Taylor H.L."/>
            <person name="Wang Z.T."/>
            <person name="Raymond J."/>
            <person name="Chen M."/>
            <person name="Blankenship R.E."/>
            <person name="Touchman J.W."/>
        </authorList>
    </citation>
    <scope>NUCLEOTIDE SEQUENCE [LARGE SCALE GENOMIC DNA]</scope>
    <source>
        <strain>ATCC 51547 / Ice1</strain>
    </source>
</reference>
<organism>
    <name type="scientific">Heliobacterium modesticaldum (strain ATCC 51547 / Ice1)</name>
    <dbReference type="NCBI Taxonomy" id="498761"/>
    <lineage>
        <taxon>Bacteria</taxon>
        <taxon>Bacillati</taxon>
        <taxon>Bacillota</taxon>
        <taxon>Clostridia</taxon>
        <taxon>Eubacteriales</taxon>
        <taxon>Heliobacteriaceae</taxon>
        <taxon>Heliomicrobium</taxon>
    </lineage>
</organism>
<keyword id="KW-1185">Reference proteome</keyword>
<keyword id="KW-0687">Ribonucleoprotein</keyword>
<keyword id="KW-0689">Ribosomal protein</keyword>
<evidence type="ECO:0000255" key="1">
    <source>
        <dbReference type="HAMAP-Rule" id="MF_00508"/>
    </source>
</evidence>
<evidence type="ECO:0000305" key="2"/>
<sequence length="102" mass="11626">MGKQKIRIRLKAFDHRILDQSSEKIVETAKRTGAAVSGPIPLPTEKSIYTILRSPHVNKDSREQFEMRTHKRLIDILEPNPKTVDALMRLDLPAGVDIEIKL</sequence>
<protein>
    <recommendedName>
        <fullName evidence="1">Small ribosomal subunit protein uS10</fullName>
    </recommendedName>
    <alternativeName>
        <fullName evidence="2">30S ribosomal protein S10</fullName>
    </alternativeName>
</protein>
<comment type="function">
    <text evidence="1">Involved in the binding of tRNA to the ribosomes.</text>
</comment>
<comment type="subunit">
    <text evidence="1">Part of the 30S ribosomal subunit.</text>
</comment>
<comment type="similarity">
    <text evidence="1">Belongs to the universal ribosomal protein uS10 family.</text>
</comment>
<dbReference type="EMBL" id="CP000930">
    <property type="protein sequence ID" value="ABZ83954.1"/>
    <property type="molecule type" value="Genomic_DNA"/>
</dbReference>
<dbReference type="RefSeq" id="WP_012282470.1">
    <property type="nucleotide sequence ID" value="NC_010337.2"/>
</dbReference>
<dbReference type="SMR" id="B0TC55"/>
<dbReference type="STRING" id="498761.HM1_1377"/>
<dbReference type="KEGG" id="hmo:HM1_1377"/>
<dbReference type="eggNOG" id="COG0051">
    <property type="taxonomic scope" value="Bacteria"/>
</dbReference>
<dbReference type="HOGENOM" id="CLU_122625_1_3_9"/>
<dbReference type="OrthoDB" id="9804464at2"/>
<dbReference type="Proteomes" id="UP000008550">
    <property type="component" value="Chromosome"/>
</dbReference>
<dbReference type="GO" id="GO:1990904">
    <property type="term" value="C:ribonucleoprotein complex"/>
    <property type="evidence" value="ECO:0007669"/>
    <property type="project" value="UniProtKB-KW"/>
</dbReference>
<dbReference type="GO" id="GO:0005840">
    <property type="term" value="C:ribosome"/>
    <property type="evidence" value="ECO:0007669"/>
    <property type="project" value="UniProtKB-KW"/>
</dbReference>
<dbReference type="GO" id="GO:0003735">
    <property type="term" value="F:structural constituent of ribosome"/>
    <property type="evidence" value="ECO:0007669"/>
    <property type="project" value="InterPro"/>
</dbReference>
<dbReference type="GO" id="GO:0000049">
    <property type="term" value="F:tRNA binding"/>
    <property type="evidence" value="ECO:0007669"/>
    <property type="project" value="UniProtKB-UniRule"/>
</dbReference>
<dbReference type="GO" id="GO:0006412">
    <property type="term" value="P:translation"/>
    <property type="evidence" value="ECO:0007669"/>
    <property type="project" value="UniProtKB-UniRule"/>
</dbReference>
<dbReference type="FunFam" id="3.30.70.600:FF:000001">
    <property type="entry name" value="30S ribosomal protein S10"/>
    <property type="match status" value="1"/>
</dbReference>
<dbReference type="Gene3D" id="3.30.70.600">
    <property type="entry name" value="Ribosomal protein S10 domain"/>
    <property type="match status" value="1"/>
</dbReference>
<dbReference type="HAMAP" id="MF_00508">
    <property type="entry name" value="Ribosomal_uS10"/>
    <property type="match status" value="1"/>
</dbReference>
<dbReference type="InterPro" id="IPR001848">
    <property type="entry name" value="Ribosomal_uS10"/>
</dbReference>
<dbReference type="InterPro" id="IPR018268">
    <property type="entry name" value="Ribosomal_uS10_CS"/>
</dbReference>
<dbReference type="InterPro" id="IPR027486">
    <property type="entry name" value="Ribosomal_uS10_dom"/>
</dbReference>
<dbReference type="InterPro" id="IPR036838">
    <property type="entry name" value="Ribosomal_uS10_dom_sf"/>
</dbReference>
<dbReference type="NCBIfam" id="NF001861">
    <property type="entry name" value="PRK00596.1"/>
    <property type="match status" value="1"/>
</dbReference>
<dbReference type="NCBIfam" id="TIGR01049">
    <property type="entry name" value="rpsJ_bact"/>
    <property type="match status" value="1"/>
</dbReference>
<dbReference type="PANTHER" id="PTHR11700">
    <property type="entry name" value="30S RIBOSOMAL PROTEIN S10 FAMILY MEMBER"/>
    <property type="match status" value="1"/>
</dbReference>
<dbReference type="Pfam" id="PF00338">
    <property type="entry name" value="Ribosomal_S10"/>
    <property type="match status" value="1"/>
</dbReference>
<dbReference type="PRINTS" id="PR00971">
    <property type="entry name" value="RIBOSOMALS10"/>
</dbReference>
<dbReference type="SMART" id="SM01403">
    <property type="entry name" value="Ribosomal_S10"/>
    <property type="match status" value="1"/>
</dbReference>
<dbReference type="SUPFAM" id="SSF54999">
    <property type="entry name" value="Ribosomal protein S10"/>
    <property type="match status" value="1"/>
</dbReference>
<dbReference type="PROSITE" id="PS00361">
    <property type="entry name" value="RIBOSOMAL_S10"/>
    <property type="match status" value="1"/>
</dbReference>
<accession>B0TC55</accession>
<gene>
    <name evidence="1" type="primary">rpsJ</name>
    <name type="ordered locus">Helmi_13290</name>
    <name type="ORF">HM1_1377</name>
</gene>
<feature type="chain" id="PRO_1000127133" description="Small ribosomal subunit protein uS10">
    <location>
        <begin position="1"/>
        <end position="102"/>
    </location>
</feature>
<proteinExistence type="inferred from homology"/>